<proteinExistence type="inferred from homology"/>
<feature type="chain" id="PRO_0000179993" description="GTPase Era">
    <location>
        <begin position="1"/>
        <end position="317"/>
    </location>
</feature>
<feature type="domain" description="Era-type G" evidence="2">
    <location>
        <begin position="23"/>
        <end position="190"/>
    </location>
</feature>
<feature type="domain" description="KH type-2" evidence="1">
    <location>
        <begin position="221"/>
        <end position="298"/>
    </location>
</feature>
<feature type="region of interest" description="G1" evidence="2">
    <location>
        <begin position="31"/>
        <end position="38"/>
    </location>
</feature>
<feature type="region of interest" description="G2" evidence="2">
    <location>
        <begin position="57"/>
        <end position="61"/>
    </location>
</feature>
<feature type="region of interest" description="G3" evidence="2">
    <location>
        <begin position="78"/>
        <end position="81"/>
    </location>
</feature>
<feature type="region of interest" description="G4" evidence="2">
    <location>
        <begin position="140"/>
        <end position="143"/>
    </location>
</feature>
<feature type="region of interest" description="G5" evidence="2">
    <location>
        <begin position="169"/>
        <end position="171"/>
    </location>
</feature>
<feature type="binding site" evidence="1">
    <location>
        <begin position="31"/>
        <end position="38"/>
    </location>
    <ligand>
        <name>GTP</name>
        <dbReference type="ChEBI" id="CHEBI:37565"/>
    </ligand>
</feature>
<feature type="binding site" evidence="1">
    <location>
        <begin position="78"/>
        <end position="82"/>
    </location>
    <ligand>
        <name>GTP</name>
        <dbReference type="ChEBI" id="CHEBI:37565"/>
    </ligand>
</feature>
<feature type="binding site" evidence="1">
    <location>
        <begin position="140"/>
        <end position="143"/>
    </location>
    <ligand>
        <name>GTP</name>
        <dbReference type="ChEBI" id="CHEBI:37565"/>
    </ligand>
</feature>
<protein>
    <recommendedName>
        <fullName evidence="1">GTPase Era</fullName>
    </recommendedName>
</protein>
<gene>
    <name evidence="1" type="primary">era</name>
    <name type="ordered locus">Atu1036</name>
    <name type="ORF">AGR_C_1909</name>
</gene>
<accession>Q8UGK1</accession>
<name>ERA_AGRFC</name>
<keyword id="KW-0997">Cell inner membrane</keyword>
<keyword id="KW-1003">Cell membrane</keyword>
<keyword id="KW-0963">Cytoplasm</keyword>
<keyword id="KW-0342">GTP-binding</keyword>
<keyword id="KW-0472">Membrane</keyword>
<keyword id="KW-0547">Nucleotide-binding</keyword>
<keyword id="KW-1185">Reference proteome</keyword>
<keyword id="KW-0690">Ribosome biogenesis</keyword>
<keyword id="KW-0694">RNA-binding</keyword>
<keyword id="KW-0699">rRNA-binding</keyword>
<evidence type="ECO:0000255" key="1">
    <source>
        <dbReference type="HAMAP-Rule" id="MF_00367"/>
    </source>
</evidence>
<evidence type="ECO:0000255" key="2">
    <source>
        <dbReference type="PROSITE-ProRule" id="PRU01050"/>
    </source>
</evidence>
<evidence type="ECO:0000305" key="3"/>
<sequence>MMDIMTDHENPAVTGEDNALPTRSGFVALIGPTNAGKSTLVNRLVGAKVSIVSHKVQTTRAVMRGIAIHKNAQIVFMDTPGIFKPRRRLDRAMVTSAWGGAKDADLILLLIDSERGLKGDAEAILEGLKDVPQKKILCLNKIDQVKREDLLKLAAAANEKVAFDRTFMISATNGSGCEDLMDYLVETLPEGPWYYPEDQISDLPMRQLAAEITREKLFLRLHQELPYASHVETEKWEERKDGSVRIEQVIYVERDSQKKIALGKNGDAIKAISTASRKELSEILEQPVHLFLFVKVRENWGDDPERFREMGLEFPRG</sequence>
<reference key="1">
    <citation type="journal article" date="2001" name="Science">
        <title>The genome of the natural genetic engineer Agrobacterium tumefaciens C58.</title>
        <authorList>
            <person name="Wood D.W."/>
            <person name="Setubal J.C."/>
            <person name="Kaul R."/>
            <person name="Monks D.E."/>
            <person name="Kitajima J.P."/>
            <person name="Okura V.K."/>
            <person name="Zhou Y."/>
            <person name="Chen L."/>
            <person name="Wood G.E."/>
            <person name="Almeida N.F. Jr."/>
            <person name="Woo L."/>
            <person name="Chen Y."/>
            <person name="Paulsen I.T."/>
            <person name="Eisen J.A."/>
            <person name="Karp P.D."/>
            <person name="Bovee D. Sr."/>
            <person name="Chapman P."/>
            <person name="Clendenning J."/>
            <person name="Deatherage G."/>
            <person name="Gillet W."/>
            <person name="Grant C."/>
            <person name="Kutyavin T."/>
            <person name="Levy R."/>
            <person name="Li M.-J."/>
            <person name="McClelland E."/>
            <person name="Palmieri A."/>
            <person name="Raymond C."/>
            <person name="Rouse G."/>
            <person name="Saenphimmachak C."/>
            <person name="Wu Z."/>
            <person name="Romero P."/>
            <person name="Gordon D."/>
            <person name="Zhang S."/>
            <person name="Yoo H."/>
            <person name="Tao Y."/>
            <person name="Biddle P."/>
            <person name="Jung M."/>
            <person name="Krespan W."/>
            <person name="Perry M."/>
            <person name="Gordon-Kamm B."/>
            <person name="Liao L."/>
            <person name="Kim S."/>
            <person name="Hendrick C."/>
            <person name="Zhao Z.-Y."/>
            <person name="Dolan M."/>
            <person name="Chumley F."/>
            <person name="Tingey S.V."/>
            <person name="Tomb J.-F."/>
            <person name="Gordon M.P."/>
            <person name="Olson M.V."/>
            <person name="Nester E.W."/>
        </authorList>
    </citation>
    <scope>NUCLEOTIDE SEQUENCE [LARGE SCALE GENOMIC DNA]</scope>
    <source>
        <strain>C58 / ATCC 33970</strain>
    </source>
</reference>
<reference key="2">
    <citation type="journal article" date="2001" name="Science">
        <title>Genome sequence of the plant pathogen and biotechnology agent Agrobacterium tumefaciens C58.</title>
        <authorList>
            <person name="Goodner B."/>
            <person name="Hinkle G."/>
            <person name="Gattung S."/>
            <person name="Miller N."/>
            <person name="Blanchard M."/>
            <person name="Qurollo B."/>
            <person name="Goldman B.S."/>
            <person name="Cao Y."/>
            <person name="Askenazi M."/>
            <person name="Halling C."/>
            <person name="Mullin L."/>
            <person name="Houmiel K."/>
            <person name="Gordon J."/>
            <person name="Vaudin M."/>
            <person name="Iartchouk O."/>
            <person name="Epp A."/>
            <person name="Liu F."/>
            <person name="Wollam C."/>
            <person name="Allinger M."/>
            <person name="Doughty D."/>
            <person name="Scott C."/>
            <person name="Lappas C."/>
            <person name="Markelz B."/>
            <person name="Flanagan C."/>
            <person name="Crowell C."/>
            <person name="Gurson J."/>
            <person name="Lomo C."/>
            <person name="Sear C."/>
            <person name="Strub G."/>
            <person name="Cielo C."/>
            <person name="Slater S."/>
        </authorList>
    </citation>
    <scope>NUCLEOTIDE SEQUENCE [LARGE SCALE GENOMIC DNA]</scope>
    <source>
        <strain>C58 / ATCC 33970</strain>
    </source>
</reference>
<organism>
    <name type="scientific">Agrobacterium fabrum (strain C58 / ATCC 33970)</name>
    <name type="common">Agrobacterium tumefaciens (strain C58)</name>
    <dbReference type="NCBI Taxonomy" id="176299"/>
    <lineage>
        <taxon>Bacteria</taxon>
        <taxon>Pseudomonadati</taxon>
        <taxon>Pseudomonadota</taxon>
        <taxon>Alphaproteobacteria</taxon>
        <taxon>Hyphomicrobiales</taxon>
        <taxon>Rhizobiaceae</taxon>
        <taxon>Rhizobium/Agrobacterium group</taxon>
        <taxon>Agrobacterium</taxon>
        <taxon>Agrobacterium tumefaciens complex</taxon>
    </lineage>
</organism>
<comment type="function">
    <text evidence="1">An essential GTPase that binds both GDP and GTP, with rapid nucleotide exchange. Plays a role in 16S rRNA processing and 30S ribosomal subunit biogenesis and possibly also in cell cycle regulation and energy metabolism.</text>
</comment>
<comment type="subunit">
    <text evidence="1">Monomer.</text>
</comment>
<comment type="subcellular location">
    <subcellularLocation>
        <location>Cytoplasm</location>
    </subcellularLocation>
    <subcellularLocation>
        <location evidence="1">Cell inner membrane</location>
        <topology evidence="1">Peripheral membrane protein</topology>
    </subcellularLocation>
</comment>
<comment type="similarity">
    <text evidence="1 2">Belongs to the TRAFAC class TrmE-Era-EngA-EngB-Septin-like GTPase superfamily. Era GTPase family.</text>
</comment>
<comment type="sequence caution" evidence="3">
    <conflict type="erroneous initiation">
        <sequence resource="EMBL-CDS" id="AAK86844"/>
    </conflict>
    <text>Truncated N-terminus.</text>
</comment>
<dbReference type="EMBL" id="AE007869">
    <property type="protein sequence ID" value="AAK86844.2"/>
    <property type="status" value="ALT_INIT"/>
    <property type="molecule type" value="Genomic_DNA"/>
</dbReference>
<dbReference type="PIR" id="AC2704">
    <property type="entry name" value="AC2704"/>
</dbReference>
<dbReference type="PIR" id="C97486">
    <property type="entry name" value="C97486"/>
</dbReference>
<dbReference type="RefSeq" id="NP_354059.2">
    <property type="nucleotide sequence ID" value="NC_003062.2"/>
</dbReference>
<dbReference type="SMR" id="Q8UGK1"/>
<dbReference type="STRING" id="176299.Atu1036"/>
<dbReference type="EnsemblBacteria" id="AAK86844">
    <property type="protein sequence ID" value="AAK86844"/>
    <property type="gene ID" value="Atu1036"/>
</dbReference>
<dbReference type="KEGG" id="atu:Atu1036"/>
<dbReference type="PATRIC" id="fig|176299.10.peg.1048"/>
<dbReference type="eggNOG" id="COG1159">
    <property type="taxonomic scope" value="Bacteria"/>
</dbReference>
<dbReference type="HOGENOM" id="CLU_038009_1_1_5"/>
<dbReference type="OrthoDB" id="9805918at2"/>
<dbReference type="Proteomes" id="UP000000813">
    <property type="component" value="Chromosome circular"/>
</dbReference>
<dbReference type="GO" id="GO:0005829">
    <property type="term" value="C:cytosol"/>
    <property type="evidence" value="ECO:0007669"/>
    <property type="project" value="TreeGrafter"/>
</dbReference>
<dbReference type="GO" id="GO:0005886">
    <property type="term" value="C:plasma membrane"/>
    <property type="evidence" value="ECO:0007669"/>
    <property type="project" value="UniProtKB-SubCell"/>
</dbReference>
<dbReference type="GO" id="GO:0005525">
    <property type="term" value="F:GTP binding"/>
    <property type="evidence" value="ECO:0007669"/>
    <property type="project" value="UniProtKB-UniRule"/>
</dbReference>
<dbReference type="GO" id="GO:0003924">
    <property type="term" value="F:GTPase activity"/>
    <property type="evidence" value="ECO:0007669"/>
    <property type="project" value="UniProtKB-UniRule"/>
</dbReference>
<dbReference type="GO" id="GO:0043024">
    <property type="term" value="F:ribosomal small subunit binding"/>
    <property type="evidence" value="ECO:0007669"/>
    <property type="project" value="TreeGrafter"/>
</dbReference>
<dbReference type="GO" id="GO:0070181">
    <property type="term" value="F:small ribosomal subunit rRNA binding"/>
    <property type="evidence" value="ECO:0007669"/>
    <property type="project" value="UniProtKB-UniRule"/>
</dbReference>
<dbReference type="GO" id="GO:0000028">
    <property type="term" value="P:ribosomal small subunit assembly"/>
    <property type="evidence" value="ECO:0007669"/>
    <property type="project" value="TreeGrafter"/>
</dbReference>
<dbReference type="CDD" id="cd04163">
    <property type="entry name" value="Era"/>
    <property type="match status" value="1"/>
</dbReference>
<dbReference type="CDD" id="cd22534">
    <property type="entry name" value="KH-II_Era"/>
    <property type="match status" value="1"/>
</dbReference>
<dbReference type="FunFam" id="3.40.50.300:FF:001190">
    <property type="entry name" value="GTP-binding protein ERG"/>
    <property type="match status" value="1"/>
</dbReference>
<dbReference type="FunFam" id="3.30.300.20:FF:000031">
    <property type="entry name" value="GTPase Era"/>
    <property type="match status" value="1"/>
</dbReference>
<dbReference type="Gene3D" id="3.30.300.20">
    <property type="match status" value="1"/>
</dbReference>
<dbReference type="Gene3D" id="3.40.50.300">
    <property type="entry name" value="P-loop containing nucleotide triphosphate hydrolases"/>
    <property type="match status" value="1"/>
</dbReference>
<dbReference type="HAMAP" id="MF_00367">
    <property type="entry name" value="GTPase_Era"/>
    <property type="match status" value="1"/>
</dbReference>
<dbReference type="InterPro" id="IPR030388">
    <property type="entry name" value="G_ERA_dom"/>
</dbReference>
<dbReference type="InterPro" id="IPR006073">
    <property type="entry name" value="GTP-bd"/>
</dbReference>
<dbReference type="InterPro" id="IPR005662">
    <property type="entry name" value="GTPase_Era-like"/>
</dbReference>
<dbReference type="InterPro" id="IPR015946">
    <property type="entry name" value="KH_dom-like_a/b"/>
</dbReference>
<dbReference type="InterPro" id="IPR004044">
    <property type="entry name" value="KH_dom_type_2"/>
</dbReference>
<dbReference type="InterPro" id="IPR009019">
    <property type="entry name" value="KH_sf_prok-type"/>
</dbReference>
<dbReference type="InterPro" id="IPR027417">
    <property type="entry name" value="P-loop_NTPase"/>
</dbReference>
<dbReference type="InterPro" id="IPR005225">
    <property type="entry name" value="Small_GTP-bd"/>
</dbReference>
<dbReference type="NCBIfam" id="TIGR00436">
    <property type="entry name" value="era"/>
    <property type="match status" value="1"/>
</dbReference>
<dbReference type="NCBIfam" id="NF000908">
    <property type="entry name" value="PRK00089.1"/>
    <property type="match status" value="1"/>
</dbReference>
<dbReference type="NCBIfam" id="TIGR00231">
    <property type="entry name" value="small_GTP"/>
    <property type="match status" value="1"/>
</dbReference>
<dbReference type="PANTHER" id="PTHR42698">
    <property type="entry name" value="GTPASE ERA"/>
    <property type="match status" value="1"/>
</dbReference>
<dbReference type="PANTHER" id="PTHR42698:SF1">
    <property type="entry name" value="GTPASE ERA, MITOCHONDRIAL"/>
    <property type="match status" value="1"/>
</dbReference>
<dbReference type="Pfam" id="PF07650">
    <property type="entry name" value="KH_2"/>
    <property type="match status" value="1"/>
</dbReference>
<dbReference type="Pfam" id="PF01926">
    <property type="entry name" value="MMR_HSR1"/>
    <property type="match status" value="1"/>
</dbReference>
<dbReference type="SUPFAM" id="SSF52540">
    <property type="entry name" value="P-loop containing nucleoside triphosphate hydrolases"/>
    <property type="match status" value="1"/>
</dbReference>
<dbReference type="SUPFAM" id="SSF54814">
    <property type="entry name" value="Prokaryotic type KH domain (KH-domain type II)"/>
    <property type="match status" value="1"/>
</dbReference>
<dbReference type="PROSITE" id="PS51713">
    <property type="entry name" value="G_ERA"/>
    <property type="match status" value="1"/>
</dbReference>
<dbReference type="PROSITE" id="PS50823">
    <property type="entry name" value="KH_TYPE_2"/>
    <property type="match status" value="1"/>
</dbReference>